<name>Y1725_STRP2</name>
<sequence length="238" mass="25830">MGRKWANIVAKKTAKDGANSKVYAKFGVEIYVAAKKGDPDPESNSALKFVIDRAKQAQVPKHIIDKAIDKAKGNTDETFTEGRYEGFGPNGSMLIVDTLTSNVNRTAANVRAAFGKNGGNMGASGSVSYLFDNKGVIVFGGEDADAVFEQLLEADVDVDDVEAQEGTITVYTAPTDLHKAIVALRESGIEEFQVTELEMIPQSEVELSGEDLETFEKLYSVLEDDEDVQKIYTNVDGF</sequence>
<comment type="subcellular location">
    <subcellularLocation>
        <location evidence="1">Cytoplasm</location>
    </subcellularLocation>
</comment>
<comment type="similarity">
    <text evidence="1">Belongs to the TACO1 family. YeeN subfamily.</text>
</comment>
<accession>Q04IN9</accession>
<organism>
    <name type="scientific">Streptococcus pneumoniae serotype 2 (strain D39 / NCTC 7466)</name>
    <dbReference type="NCBI Taxonomy" id="373153"/>
    <lineage>
        <taxon>Bacteria</taxon>
        <taxon>Bacillati</taxon>
        <taxon>Bacillota</taxon>
        <taxon>Bacilli</taxon>
        <taxon>Lactobacillales</taxon>
        <taxon>Streptococcaceae</taxon>
        <taxon>Streptococcus</taxon>
    </lineage>
</organism>
<proteinExistence type="inferred from homology"/>
<protein>
    <recommendedName>
        <fullName evidence="1">Probable transcriptional regulatory protein SPD_1725</fullName>
    </recommendedName>
</protein>
<gene>
    <name type="ordered locus">SPD_1725</name>
</gene>
<reference key="1">
    <citation type="journal article" date="2007" name="J. Bacteriol.">
        <title>Genome sequence of Avery's virulent serotype 2 strain D39 of Streptococcus pneumoniae and comparison with that of unencapsulated laboratory strain R6.</title>
        <authorList>
            <person name="Lanie J.A."/>
            <person name="Ng W.-L."/>
            <person name="Kazmierczak K.M."/>
            <person name="Andrzejewski T.M."/>
            <person name="Davidsen T.M."/>
            <person name="Wayne K.J."/>
            <person name="Tettelin H."/>
            <person name="Glass J.I."/>
            <person name="Winkler M.E."/>
        </authorList>
    </citation>
    <scope>NUCLEOTIDE SEQUENCE [LARGE SCALE GENOMIC DNA]</scope>
    <source>
        <strain>D39 / NCTC 7466</strain>
    </source>
</reference>
<feature type="chain" id="PRO_1000045375" description="Probable transcriptional regulatory protein SPD_1725">
    <location>
        <begin position="1"/>
        <end position="238"/>
    </location>
</feature>
<evidence type="ECO:0000255" key="1">
    <source>
        <dbReference type="HAMAP-Rule" id="MF_00918"/>
    </source>
</evidence>
<keyword id="KW-0963">Cytoplasm</keyword>
<keyword id="KW-0238">DNA-binding</keyword>
<keyword id="KW-1185">Reference proteome</keyword>
<keyword id="KW-0804">Transcription</keyword>
<keyword id="KW-0805">Transcription regulation</keyword>
<dbReference type="EMBL" id="CP000410">
    <property type="protein sequence ID" value="ABJ55474.1"/>
    <property type="molecule type" value="Genomic_DNA"/>
</dbReference>
<dbReference type="RefSeq" id="WP_000532876.1">
    <property type="nucleotide sequence ID" value="NZ_JAMLJR010000010.1"/>
</dbReference>
<dbReference type="SMR" id="Q04IN9"/>
<dbReference type="PaxDb" id="373153-SPD_1725"/>
<dbReference type="KEGG" id="spd:SPD_1725"/>
<dbReference type="eggNOG" id="COG0217">
    <property type="taxonomic scope" value="Bacteria"/>
</dbReference>
<dbReference type="HOGENOM" id="CLU_062974_2_0_9"/>
<dbReference type="BioCyc" id="SPNE373153:G1G6V-1862-MONOMER"/>
<dbReference type="Proteomes" id="UP000001452">
    <property type="component" value="Chromosome"/>
</dbReference>
<dbReference type="GO" id="GO:0005829">
    <property type="term" value="C:cytosol"/>
    <property type="evidence" value="ECO:0007669"/>
    <property type="project" value="TreeGrafter"/>
</dbReference>
<dbReference type="GO" id="GO:0003677">
    <property type="term" value="F:DNA binding"/>
    <property type="evidence" value="ECO:0007669"/>
    <property type="project" value="UniProtKB-UniRule"/>
</dbReference>
<dbReference type="GO" id="GO:0006355">
    <property type="term" value="P:regulation of DNA-templated transcription"/>
    <property type="evidence" value="ECO:0007669"/>
    <property type="project" value="UniProtKB-UniRule"/>
</dbReference>
<dbReference type="FunFam" id="1.10.10.200:FF:000003">
    <property type="entry name" value="Probable transcriptional regulatory protein YeeN"/>
    <property type="match status" value="1"/>
</dbReference>
<dbReference type="FunFam" id="3.30.70.980:FF:000004">
    <property type="entry name" value="Probable transcriptional regulatory protein YeeN"/>
    <property type="match status" value="1"/>
</dbReference>
<dbReference type="Gene3D" id="1.10.10.200">
    <property type="match status" value="1"/>
</dbReference>
<dbReference type="Gene3D" id="3.30.70.980">
    <property type="match status" value="2"/>
</dbReference>
<dbReference type="HAMAP" id="MF_00693">
    <property type="entry name" value="Transcrip_reg_TACO1"/>
    <property type="match status" value="1"/>
</dbReference>
<dbReference type="HAMAP" id="MF_00918">
    <property type="entry name" value="Transcrip_reg_TACO1_YeeN"/>
    <property type="match status" value="1"/>
</dbReference>
<dbReference type="InterPro" id="IPR017856">
    <property type="entry name" value="Integrase-like_N"/>
</dbReference>
<dbReference type="InterPro" id="IPR048300">
    <property type="entry name" value="TACO1_YebC-like_2nd/3rd_dom"/>
</dbReference>
<dbReference type="InterPro" id="IPR049083">
    <property type="entry name" value="TACO1_YebC_N"/>
</dbReference>
<dbReference type="InterPro" id="IPR002876">
    <property type="entry name" value="Transcrip_reg_TACO1-like"/>
</dbReference>
<dbReference type="InterPro" id="IPR026564">
    <property type="entry name" value="Transcrip_reg_TACO1-like_dom3"/>
</dbReference>
<dbReference type="InterPro" id="IPR026562">
    <property type="entry name" value="Transcrip_reg_TACO1_YeeN"/>
</dbReference>
<dbReference type="InterPro" id="IPR029072">
    <property type="entry name" value="YebC-like"/>
</dbReference>
<dbReference type="NCBIfam" id="NF001030">
    <property type="entry name" value="PRK00110.1"/>
    <property type="match status" value="1"/>
</dbReference>
<dbReference type="NCBIfam" id="NF009044">
    <property type="entry name" value="PRK12378.1"/>
    <property type="match status" value="1"/>
</dbReference>
<dbReference type="NCBIfam" id="TIGR01033">
    <property type="entry name" value="YebC/PmpR family DNA-binding transcriptional regulator"/>
    <property type="match status" value="1"/>
</dbReference>
<dbReference type="PANTHER" id="PTHR12532">
    <property type="entry name" value="TRANSLATIONAL ACTIVATOR OF CYTOCHROME C OXIDASE 1"/>
    <property type="match status" value="1"/>
</dbReference>
<dbReference type="PANTHER" id="PTHR12532:SF0">
    <property type="entry name" value="TRANSLATIONAL ACTIVATOR OF CYTOCHROME C OXIDASE 1"/>
    <property type="match status" value="1"/>
</dbReference>
<dbReference type="Pfam" id="PF20772">
    <property type="entry name" value="TACO1_YebC_N"/>
    <property type="match status" value="1"/>
</dbReference>
<dbReference type="Pfam" id="PF01709">
    <property type="entry name" value="Transcrip_reg"/>
    <property type="match status" value="1"/>
</dbReference>
<dbReference type="SUPFAM" id="SSF75625">
    <property type="entry name" value="YebC-like"/>
    <property type="match status" value="1"/>
</dbReference>